<feature type="chain" id="PRO_1000007736" description="5'-nucleotidase SurE">
    <location>
        <begin position="1"/>
        <end position="251"/>
    </location>
</feature>
<feature type="binding site" evidence="1">
    <location>
        <position position="8"/>
    </location>
    <ligand>
        <name>a divalent metal cation</name>
        <dbReference type="ChEBI" id="CHEBI:60240"/>
    </ligand>
</feature>
<feature type="binding site" evidence="1">
    <location>
        <position position="9"/>
    </location>
    <ligand>
        <name>a divalent metal cation</name>
        <dbReference type="ChEBI" id="CHEBI:60240"/>
    </ligand>
</feature>
<feature type="binding site" evidence="1">
    <location>
        <position position="39"/>
    </location>
    <ligand>
        <name>a divalent metal cation</name>
        <dbReference type="ChEBI" id="CHEBI:60240"/>
    </ligand>
</feature>
<feature type="binding site" evidence="1">
    <location>
        <position position="91"/>
    </location>
    <ligand>
        <name>a divalent metal cation</name>
        <dbReference type="ChEBI" id="CHEBI:60240"/>
    </ligand>
</feature>
<accession>A1WWY6</accession>
<evidence type="ECO:0000255" key="1">
    <source>
        <dbReference type="HAMAP-Rule" id="MF_00060"/>
    </source>
</evidence>
<gene>
    <name evidence="1" type="primary">surE</name>
    <name type="ordered locus">Hhal_1431</name>
</gene>
<name>SURE_HALHL</name>
<comment type="function">
    <text evidence="1">Nucleotidase that shows phosphatase activity on nucleoside 5'-monophosphates.</text>
</comment>
<comment type="catalytic activity">
    <reaction evidence="1">
        <text>a ribonucleoside 5'-phosphate + H2O = a ribonucleoside + phosphate</text>
        <dbReference type="Rhea" id="RHEA:12484"/>
        <dbReference type="ChEBI" id="CHEBI:15377"/>
        <dbReference type="ChEBI" id="CHEBI:18254"/>
        <dbReference type="ChEBI" id="CHEBI:43474"/>
        <dbReference type="ChEBI" id="CHEBI:58043"/>
        <dbReference type="EC" id="3.1.3.5"/>
    </reaction>
</comment>
<comment type="cofactor">
    <cofactor evidence="1">
        <name>a divalent metal cation</name>
        <dbReference type="ChEBI" id="CHEBI:60240"/>
    </cofactor>
    <text evidence="1">Binds 1 divalent metal cation per subunit.</text>
</comment>
<comment type="subcellular location">
    <subcellularLocation>
        <location evidence="1">Cytoplasm</location>
    </subcellularLocation>
</comment>
<comment type="similarity">
    <text evidence="1">Belongs to the SurE nucleotidase family.</text>
</comment>
<organism>
    <name type="scientific">Halorhodospira halophila (strain DSM 244 / SL1)</name>
    <name type="common">Ectothiorhodospira halophila (strain DSM 244 / SL1)</name>
    <dbReference type="NCBI Taxonomy" id="349124"/>
    <lineage>
        <taxon>Bacteria</taxon>
        <taxon>Pseudomonadati</taxon>
        <taxon>Pseudomonadota</taxon>
        <taxon>Gammaproteobacteria</taxon>
        <taxon>Chromatiales</taxon>
        <taxon>Ectothiorhodospiraceae</taxon>
        <taxon>Halorhodospira</taxon>
    </lineage>
</organism>
<protein>
    <recommendedName>
        <fullName evidence="1">5'-nucleotidase SurE</fullName>
        <ecNumber evidence="1">3.1.3.5</ecNumber>
    </recommendedName>
    <alternativeName>
        <fullName evidence="1">Nucleoside 5'-monophosphate phosphohydrolase</fullName>
    </alternativeName>
</protein>
<keyword id="KW-0963">Cytoplasm</keyword>
<keyword id="KW-0378">Hydrolase</keyword>
<keyword id="KW-0479">Metal-binding</keyword>
<keyword id="KW-0547">Nucleotide-binding</keyword>
<keyword id="KW-1185">Reference proteome</keyword>
<reference key="1">
    <citation type="submission" date="2006-12" db="EMBL/GenBank/DDBJ databases">
        <title>Complete sequence of Halorhodospira halophila SL1.</title>
        <authorList>
            <consortium name="US DOE Joint Genome Institute"/>
            <person name="Copeland A."/>
            <person name="Lucas S."/>
            <person name="Lapidus A."/>
            <person name="Barry K."/>
            <person name="Detter J.C."/>
            <person name="Glavina del Rio T."/>
            <person name="Hammon N."/>
            <person name="Israni S."/>
            <person name="Dalin E."/>
            <person name="Tice H."/>
            <person name="Pitluck S."/>
            <person name="Saunders E."/>
            <person name="Brettin T."/>
            <person name="Bruce D."/>
            <person name="Han C."/>
            <person name="Tapia R."/>
            <person name="Schmutz J."/>
            <person name="Larimer F."/>
            <person name="Land M."/>
            <person name="Hauser L."/>
            <person name="Kyrpides N."/>
            <person name="Mikhailova N."/>
            <person name="Hoff W."/>
            <person name="Richardson P."/>
        </authorList>
    </citation>
    <scope>NUCLEOTIDE SEQUENCE [LARGE SCALE GENOMIC DNA]</scope>
    <source>
        <strain>DSM 244 / SL1</strain>
    </source>
</reference>
<sequence>MYILISNDDGYQAEGILKLAERLGTVARVTVMAPERDRSGASNSLTLEDPIRVHPIEPDRFRVQGTPTDCVHLALTGLLEEDPDMVFSGINAGANLGDDVLYSGTVAAAMEGRYLGLPAVAISLAGTWAPVHYDTAARVAVKLLEQIQDDPLPPDSILNVNVPDLPWDEIQGFHATRLGCRHRAEPVIKQHDPRGRTIYWVGPPGSEQDAGPGTDFYAVRNGFVSVTPIQVDLTRHAGLEQVRGWLDGVTW</sequence>
<dbReference type="EC" id="3.1.3.5" evidence="1"/>
<dbReference type="EMBL" id="CP000544">
    <property type="protein sequence ID" value="ABM62198.1"/>
    <property type="molecule type" value="Genomic_DNA"/>
</dbReference>
<dbReference type="RefSeq" id="WP_011814220.1">
    <property type="nucleotide sequence ID" value="NC_008789.1"/>
</dbReference>
<dbReference type="SMR" id="A1WWY6"/>
<dbReference type="STRING" id="349124.Hhal_1431"/>
<dbReference type="KEGG" id="hha:Hhal_1431"/>
<dbReference type="eggNOG" id="COG0496">
    <property type="taxonomic scope" value="Bacteria"/>
</dbReference>
<dbReference type="HOGENOM" id="CLU_045192_1_2_6"/>
<dbReference type="OrthoDB" id="9780815at2"/>
<dbReference type="Proteomes" id="UP000000647">
    <property type="component" value="Chromosome"/>
</dbReference>
<dbReference type="GO" id="GO:0005737">
    <property type="term" value="C:cytoplasm"/>
    <property type="evidence" value="ECO:0007669"/>
    <property type="project" value="UniProtKB-SubCell"/>
</dbReference>
<dbReference type="GO" id="GO:0008254">
    <property type="term" value="F:3'-nucleotidase activity"/>
    <property type="evidence" value="ECO:0007669"/>
    <property type="project" value="TreeGrafter"/>
</dbReference>
<dbReference type="GO" id="GO:0008253">
    <property type="term" value="F:5'-nucleotidase activity"/>
    <property type="evidence" value="ECO:0007669"/>
    <property type="project" value="UniProtKB-UniRule"/>
</dbReference>
<dbReference type="GO" id="GO:0004309">
    <property type="term" value="F:exopolyphosphatase activity"/>
    <property type="evidence" value="ECO:0007669"/>
    <property type="project" value="TreeGrafter"/>
</dbReference>
<dbReference type="GO" id="GO:0046872">
    <property type="term" value="F:metal ion binding"/>
    <property type="evidence" value="ECO:0007669"/>
    <property type="project" value="UniProtKB-UniRule"/>
</dbReference>
<dbReference type="GO" id="GO:0000166">
    <property type="term" value="F:nucleotide binding"/>
    <property type="evidence" value="ECO:0007669"/>
    <property type="project" value="UniProtKB-KW"/>
</dbReference>
<dbReference type="FunFam" id="3.40.1210.10:FF:000001">
    <property type="entry name" value="5'/3'-nucleotidase SurE"/>
    <property type="match status" value="1"/>
</dbReference>
<dbReference type="Gene3D" id="3.40.1210.10">
    <property type="entry name" value="Survival protein SurE-like phosphatase/nucleotidase"/>
    <property type="match status" value="1"/>
</dbReference>
<dbReference type="HAMAP" id="MF_00060">
    <property type="entry name" value="SurE"/>
    <property type="match status" value="1"/>
</dbReference>
<dbReference type="InterPro" id="IPR030048">
    <property type="entry name" value="SurE"/>
</dbReference>
<dbReference type="InterPro" id="IPR002828">
    <property type="entry name" value="SurE-like_Pase/nucleotidase"/>
</dbReference>
<dbReference type="InterPro" id="IPR036523">
    <property type="entry name" value="SurE-like_sf"/>
</dbReference>
<dbReference type="NCBIfam" id="NF001489">
    <property type="entry name" value="PRK00346.1-3"/>
    <property type="match status" value="1"/>
</dbReference>
<dbReference type="NCBIfam" id="NF001490">
    <property type="entry name" value="PRK00346.1-4"/>
    <property type="match status" value="1"/>
</dbReference>
<dbReference type="NCBIfam" id="TIGR00087">
    <property type="entry name" value="surE"/>
    <property type="match status" value="1"/>
</dbReference>
<dbReference type="PANTHER" id="PTHR30457">
    <property type="entry name" value="5'-NUCLEOTIDASE SURE"/>
    <property type="match status" value="1"/>
</dbReference>
<dbReference type="PANTHER" id="PTHR30457:SF12">
    <property type="entry name" value="5'_3'-NUCLEOTIDASE SURE"/>
    <property type="match status" value="1"/>
</dbReference>
<dbReference type="Pfam" id="PF01975">
    <property type="entry name" value="SurE"/>
    <property type="match status" value="1"/>
</dbReference>
<dbReference type="SUPFAM" id="SSF64167">
    <property type="entry name" value="SurE-like"/>
    <property type="match status" value="1"/>
</dbReference>
<proteinExistence type="inferred from homology"/>